<comment type="similarity">
    <text evidence="4">Belongs to the methyl-accepting chemotaxis (MCP) protein family.</text>
</comment>
<accession>Q55445</accession>
<evidence type="ECO:0000255" key="1">
    <source>
        <dbReference type="PROSITE-ProRule" id="PRU00102"/>
    </source>
</evidence>
<evidence type="ECO:0000255" key="2">
    <source>
        <dbReference type="PROSITE-ProRule" id="PRU00284"/>
    </source>
</evidence>
<evidence type="ECO:0000256" key="3">
    <source>
        <dbReference type="SAM" id="MobiDB-lite"/>
    </source>
</evidence>
<evidence type="ECO:0000305" key="4"/>
<organism>
    <name type="scientific">Synechocystis sp. (strain ATCC 27184 / PCC 6803 / Kazusa)</name>
    <dbReference type="NCBI Taxonomy" id="1111708"/>
    <lineage>
        <taxon>Bacteria</taxon>
        <taxon>Bacillati</taxon>
        <taxon>Cyanobacteriota</taxon>
        <taxon>Cyanophyceae</taxon>
        <taxon>Synechococcales</taxon>
        <taxon>Merismopediaceae</taxon>
        <taxon>Synechocystis</taxon>
    </lineage>
</organism>
<sequence length="1000" mass="108335">MTQNPSSDRRPDTAQSVANGETLDGALFTGLTDTAAAQDESSETSASFATIDGEDKSEVGDALDWFSDGKETDINGDEADRGIQADTQAKTLVSLENLTEEPEIDGAEFMAEAFIAENTAVEDVSPNPNPAIDTDALAALTQSAVELTPPPPINLPKVELPPMQPLAPLMAIADPDNLSPMSTSIQAPTQSGGLSLRNKAVLIALLIGLIPAGVIGGLNLSSVDRLPVPQTEQQVKDSTTKQIRDQILIGLLVTAVGAAFVAYWMVGENTKAQTALALKAKHSHRNLDQPLAVAGDELAIADQTIDALSAQVEKLRHQQDLSLKQAELLTELSRANLSDIDEIQGVIQKNLDQARALFGCERLVFYYHPRYQPEAMVVQALDLTTQGLIDSKDPHPWGQEDMPSQIVAINDTSGASISNPHRQWLEQHQVKASLTVPLHRDNYPLGLLMAHHCQRPHQWEMRERQFLQQLTEELQTTLDRANLIQERNESAQQAQILKELTLKISAAINSEQVFDIAAQEIRLALKADRVIVYRFDATWAGTVIVESVAEGYPKALGATIADPCFADSYVEKYRSGRIQATRDIYNAGLTPCHIGQLKPFEVKANLVAPINYKGNLLGLLIAHQCSGPRDWHQNEIDLFGQLTVQVGLALERSDLLAQQKIAEVEQRQMREKMQKRALELLMEVDPVSRGDLTIRAHVTEDEIGTIADSYNATIESLRRIVTQVQTAASQFTETTDTNEVAVRQLAQQANRQALDVAEALERLQAMNKSIQAVAENAAQAESAVQRATQTVDQGEDAMNRTVDGIVAIRETVAATAKQVKRLGESSQKISKVVNLIGSFADQTNLLALNAAIEAAHAGEEGRGFAVVADEVRSLARQSAEATAEIAQLVATIQAETNEVVNAMEAGTEQVVVGTKLVEETRRSLNQITAVSAQISGLVEAITSAAIEQSQTSESVTQTMALVAQIADKNSSEASGVSATFKELLAVAQSLQEAVKQFKVQ</sequence>
<feature type="chain" id="PRO_0000110571" description="Putative methyl-accepting chemotaxis protein sll0041">
    <location>
        <begin position="1"/>
        <end position="1000"/>
    </location>
</feature>
<feature type="domain" description="GAF 1">
    <location>
        <begin position="342"/>
        <end position="478"/>
    </location>
</feature>
<feature type="domain" description="GAF 2">
    <location>
        <begin position="509"/>
        <end position="650"/>
    </location>
</feature>
<feature type="domain" description="HAMP" evidence="1">
    <location>
        <begin position="671"/>
        <end position="722"/>
    </location>
</feature>
<feature type="domain" description="Methyl-accepting transducer" evidence="2">
    <location>
        <begin position="727"/>
        <end position="963"/>
    </location>
</feature>
<feature type="region of interest" description="Disordered" evidence="3">
    <location>
        <begin position="1"/>
        <end position="59"/>
    </location>
</feature>
<gene>
    <name type="ordered locus">sll0041</name>
</gene>
<proteinExistence type="inferred from homology"/>
<keyword id="KW-1185">Reference proteome</keyword>
<keyword id="KW-0677">Repeat</keyword>
<keyword id="KW-0807">Transducer</keyword>
<protein>
    <recommendedName>
        <fullName>Putative methyl-accepting chemotaxis protein sll0041</fullName>
    </recommendedName>
</protein>
<dbReference type="EMBL" id="BA000022">
    <property type="protein sequence ID" value="BAA10787.2"/>
    <property type="molecule type" value="Genomic_DNA"/>
</dbReference>
<dbReference type="PIR" id="S75940">
    <property type="entry name" value="S75940"/>
</dbReference>
<dbReference type="SMR" id="Q55445"/>
<dbReference type="IntAct" id="Q55445">
    <property type="interactions" value="12"/>
</dbReference>
<dbReference type="STRING" id="1148.gene:10500291"/>
<dbReference type="PaxDb" id="1148-14595121"/>
<dbReference type="EnsemblBacteria" id="BAA10787">
    <property type="protein sequence ID" value="BAA10787"/>
    <property type="gene ID" value="BAA10787"/>
</dbReference>
<dbReference type="KEGG" id="syn:sll0041"/>
<dbReference type="eggNOG" id="COG0840">
    <property type="taxonomic scope" value="Bacteria"/>
</dbReference>
<dbReference type="eggNOG" id="COG2203">
    <property type="taxonomic scope" value="Bacteria"/>
</dbReference>
<dbReference type="InParanoid" id="Q55445"/>
<dbReference type="Proteomes" id="UP000001425">
    <property type="component" value="Chromosome"/>
</dbReference>
<dbReference type="GO" id="GO:0016020">
    <property type="term" value="C:membrane"/>
    <property type="evidence" value="ECO:0007669"/>
    <property type="project" value="InterPro"/>
</dbReference>
<dbReference type="GO" id="GO:0004888">
    <property type="term" value="F:transmembrane signaling receptor activity"/>
    <property type="evidence" value="ECO:0007669"/>
    <property type="project" value="InterPro"/>
</dbReference>
<dbReference type="GO" id="GO:0006935">
    <property type="term" value="P:chemotaxis"/>
    <property type="evidence" value="ECO:0000318"/>
    <property type="project" value="GO_Central"/>
</dbReference>
<dbReference type="GO" id="GO:0007165">
    <property type="term" value="P:signal transduction"/>
    <property type="evidence" value="ECO:0007669"/>
    <property type="project" value="UniProtKB-KW"/>
</dbReference>
<dbReference type="CDD" id="cd06225">
    <property type="entry name" value="HAMP"/>
    <property type="match status" value="1"/>
</dbReference>
<dbReference type="CDD" id="cd11386">
    <property type="entry name" value="MCP_signal"/>
    <property type="match status" value="1"/>
</dbReference>
<dbReference type="FunFam" id="1.10.287.950:FF:000001">
    <property type="entry name" value="Methyl-accepting chemotaxis sensory transducer"/>
    <property type="match status" value="1"/>
</dbReference>
<dbReference type="Gene3D" id="3.30.450.40">
    <property type="match status" value="2"/>
</dbReference>
<dbReference type="Gene3D" id="1.10.287.950">
    <property type="entry name" value="Methyl-accepting chemotaxis protein"/>
    <property type="match status" value="1"/>
</dbReference>
<dbReference type="InterPro" id="IPR004090">
    <property type="entry name" value="Chemotax_Me-accpt_rcpt"/>
</dbReference>
<dbReference type="InterPro" id="IPR003018">
    <property type="entry name" value="GAF"/>
</dbReference>
<dbReference type="InterPro" id="IPR029016">
    <property type="entry name" value="GAF-like_dom_sf"/>
</dbReference>
<dbReference type="InterPro" id="IPR003660">
    <property type="entry name" value="HAMP_dom"/>
</dbReference>
<dbReference type="InterPro" id="IPR004089">
    <property type="entry name" value="MCPsignal_dom"/>
</dbReference>
<dbReference type="InterPro" id="IPR016132">
    <property type="entry name" value="Phyto_chromo_attachment"/>
</dbReference>
<dbReference type="PANTHER" id="PTHR32089">
    <property type="entry name" value="METHYL-ACCEPTING CHEMOTAXIS PROTEIN MCPB"/>
    <property type="match status" value="1"/>
</dbReference>
<dbReference type="PANTHER" id="PTHR32089:SF114">
    <property type="entry name" value="METHYL-ACCEPTING CHEMOTAXIS PROTEIN MCPB"/>
    <property type="match status" value="1"/>
</dbReference>
<dbReference type="Pfam" id="PF01590">
    <property type="entry name" value="GAF"/>
    <property type="match status" value="2"/>
</dbReference>
<dbReference type="Pfam" id="PF00015">
    <property type="entry name" value="MCPsignal"/>
    <property type="match status" value="1"/>
</dbReference>
<dbReference type="PRINTS" id="PR00260">
    <property type="entry name" value="CHEMTRNSDUCR"/>
</dbReference>
<dbReference type="SMART" id="SM00065">
    <property type="entry name" value="GAF"/>
    <property type="match status" value="2"/>
</dbReference>
<dbReference type="SMART" id="SM00304">
    <property type="entry name" value="HAMP"/>
    <property type="match status" value="1"/>
</dbReference>
<dbReference type="SMART" id="SM00283">
    <property type="entry name" value="MA"/>
    <property type="match status" value="1"/>
</dbReference>
<dbReference type="SUPFAM" id="SSF55781">
    <property type="entry name" value="GAF domain-like"/>
    <property type="match status" value="2"/>
</dbReference>
<dbReference type="SUPFAM" id="SSF58104">
    <property type="entry name" value="Methyl-accepting chemotaxis protein (MCP) signaling domain"/>
    <property type="match status" value="1"/>
</dbReference>
<dbReference type="PROSITE" id="PS50111">
    <property type="entry name" value="CHEMOTAXIS_TRANSDUC_2"/>
    <property type="match status" value="1"/>
</dbReference>
<dbReference type="PROSITE" id="PS50885">
    <property type="entry name" value="HAMP"/>
    <property type="match status" value="1"/>
</dbReference>
<dbReference type="PROSITE" id="PS50046">
    <property type="entry name" value="PHYTOCHROME_2"/>
    <property type="match status" value="2"/>
</dbReference>
<name>Y041_SYNY3</name>
<reference key="1">
    <citation type="journal article" date="1995" name="DNA Res.">
        <title>Sequence analysis of the genome of the unicellular cyanobacterium Synechocystis sp. strain PCC6803. I. Sequence features in the 1 Mb region from map positions 64% to 92% of the genome.</title>
        <authorList>
            <person name="Kaneko T."/>
            <person name="Tanaka A."/>
            <person name="Sato S."/>
            <person name="Kotani H."/>
            <person name="Sazuka T."/>
            <person name="Miyajima N."/>
            <person name="Sugiura M."/>
            <person name="Tabata S."/>
        </authorList>
    </citation>
    <scope>NUCLEOTIDE SEQUENCE [LARGE SCALE GENOMIC DNA]</scope>
    <source>
        <strain>ATCC 27184 / PCC 6803 / N-1</strain>
    </source>
</reference>
<reference key="2">
    <citation type="journal article" date="1996" name="DNA Res.">
        <title>Sequence analysis of the genome of the unicellular cyanobacterium Synechocystis sp. strain PCC6803. II. Sequence determination of the entire genome and assignment of potential protein-coding regions.</title>
        <authorList>
            <person name="Kaneko T."/>
            <person name="Sato S."/>
            <person name="Kotani H."/>
            <person name="Tanaka A."/>
            <person name="Asamizu E."/>
            <person name="Nakamura Y."/>
            <person name="Miyajima N."/>
            <person name="Hirosawa M."/>
            <person name="Sugiura M."/>
            <person name="Sasamoto S."/>
            <person name="Kimura T."/>
            <person name="Hosouchi T."/>
            <person name="Matsuno A."/>
            <person name="Muraki A."/>
            <person name="Nakazaki N."/>
            <person name="Naruo K."/>
            <person name="Okumura S."/>
            <person name="Shimpo S."/>
            <person name="Takeuchi C."/>
            <person name="Wada T."/>
            <person name="Watanabe A."/>
            <person name="Yamada M."/>
            <person name="Yasuda M."/>
            <person name="Tabata S."/>
        </authorList>
    </citation>
    <scope>NUCLEOTIDE SEQUENCE [LARGE SCALE GENOMIC DNA]</scope>
    <source>
        <strain>ATCC 27184 / PCC 6803 / Kazusa</strain>
    </source>
</reference>